<name>Y1543_SHOC1</name>
<feature type="chain" id="PRO_0000206467" description="UPF0735 ACT domain-containing protein ABC1543">
    <location>
        <begin position="1"/>
        <end position="147"/>
    </location>
</feature>
<feature type="domain" description="ACT" evidence="1">
    <location>
        <begin position="70"/>
        <end position="145"/>
    </location>
</feature>
<gene>
    <name type="ordered locus">ABC1543</name>
</gene>
<proteinExistence type="inferred from homology"/>
<protein>
    <recommendedName>
        <fullName evidence="1">UPF0735 ACT domain-containing protein ABC1543</fullName>
    </recommendedName>
</protein>
<comment type="similarity">
    <text evidence="1">Belongs to the UPF0735 family.</text>
</comment>
<organism>
    <name type="scientific">Shouchella clausii (strain KSM-K16)</name>
    <name type="common">Alkalihalobacillus clausii</name>
    <dbReference type="NCBI Taxonomy" id="66692"/>
    <lineage>
        <taxon>Bacteria</taxon>
        <taxon>Bacillati</taxon>
        <taxon>Bacillota</taxon>
        <taxon>Bacilli</taxon>
        <taxon>Bacillales</taxon>
        <taxon>Bacillaceae</taxon>
        <taxon>Shouchella</taxon>
    </lineage>
</organism>
<accession>Q5WHS7</accession>
<dbReference type="EMBL" id="AP006627">
    <property type="protein sequence ID" value="BAD64078.1"/>
    <property type="molecule type" value="Genomic_DNA"/>
</dbReference>
<dbReference type="RefSeq" id="WP_011246387.1">
    <property type="nucleotide sequence ID" value="NC_006582.1"/>
</dbReference>
<dbReference type="STRING" id="66692.ABC1543"/>
<dbReference type="KEGG" id="bcl:ABC1543"/>
<dbReference type="eggNOG" id="COG4492">
    <property type="taxonomic scope" value="Bacteria"/>
</dbReference>
<dbReference type="HOGENOM" id="CLU_128147_0_0_9"/>
<dbReference type="OrthoDB" id="9788773at2"/>
<dbReference type="Proteomes" id="UP000001168">
    <property type="component" value="Chromosome"/>
</dbReference>
<dbReference type="CDD" id="cd04888">
    <property type="entry name" value="ACT_PheB-BS"/>
    <property type="match status" value="1"/>
</dbReference>
<dbReference type="Gene3D" id="3.30.70.260">
    <property type="match status" value="1"/>
</dbReference>
<dbReference type="HAMAP" id="MF_00707">
    <property type="entry name" value="UPF0735"/>
    <property type="match status" value="1"/>
</dbReference>
<dbReference type="InterPro" id="IPR045865">
    <property type="entry name" value="ACT-like_dom_sf"/>
</dbReference>
<dbReference type="InterPro" id="IPR002912">
    <property type="entry name" value="ACT_dom"/>
</dbReference>
<dbReference type="InterPro" id="IPR008310">
    <property type="entry name" value="UPF0735_ACT_dom-cont"/>
</dbReference>
<dbReference type="NCBIfam" id="NF003361">
    <property type="entry name" value="PRK04435.1"/>
    <property type="match status" value="1"/>
</dbReference>
<dbReference type="Pfam" id="PF01842">
    <property type="entry name" value="ACT"/>
    <property type="match status" value="1"/>
</dbReference>
<dbReference type="PIRSF" id="PIRSF025624">
    <property type="entry name" value="ACT_PheB"/>
    <property type="match status" value="1"/>
</dbReference>
<dbReference type="SUPFAM" id="SSF55021">
    <property type="entry name" value="ACT-like"/>
    <property type="match status" value="1"/>
</dbReference>
<dbReference type="PROSITE" id="PS51671">
    <property type="entry name" value="ACT"/>
    <property type="match status" value="1"/>
</dbReference>
<sequence length="147" mass="16358">MSKKQFYLVREDMLTDAMQRTLEAKALLSAGKVRKINEAVHRVGLSRSAFYKYKDGIFPFHAIAKERIMTFSINLADRSGTLSQLLNIVADTGANILTINQTIPLQGRANITLSVDTAPIEIDINELFERMEALESVERVELVGSGS</sequence>
<evidence type="ECO:0000255" key="1">
    <source>
        <dbReference type="HAMAP-Rule" id="MF_00707"/>
    </source>
</evidence>
<reference key="1">
    <citation type="submission" date="2003-10" db="EMBL/GenBank/DDBJ databases">
        <title>The complete genome sequence of the alkaliphilic Bacillus clausii KSM-K16.</title>
        <authorList>
            <person name="Takaki Y."/>
            <person name="Kageyama Y."/>
            <person name="Shimamura S."/>
            <person name="Suzuki H."/>
            <person name="Nishi S."/>
            <person name="Hatada Y."/>
            <person name="Kawai S."/>
            <person name="Ito S."/>
            <person name="Horikoshi K."/>
        </authorList>
    </citation>
    <scope>NUCLEOTIDE SEQUENCE [LARGE SCALE GENOMIC DNA]</scope>
    <source>
        <strain>KSM-K16</strain>
    </source>
</reference>
<keyword id="KW-1185">Reference proteome</keyword>